<comment type="function">
    <text evidence="1">Catalyzes the conversion of 4-hydroxy-tetrahydrodipicolinate (HTPA) to tetrahydrodipicolinate.</text>
</comment>
<comment type="catalytic activity">
    <reaction evidence="1">
        <text>(S)-2,3,4,5-tetrahydrodipicolinate + NAD(+) + H2O = (2S,4S)-4-hydroxy-2,3,4,5-tetrahydrodipicolinate + NADH + H(+)</text>
        <dbReference type="Rhea" id="RHEA:35323"/>
        <dbReference type="ChEBI" id="CHEBI:15377"/>
        <dbReference type="ChEBI" id="CHEBI:15378"/>
        <dbReference type="ChEBI" id="CHEBI:16845"/>
        <dbReference type="ChEBI" id="CHEBI:57540"/>
        <dbReference type="ChEBI" id="CHEBI:57945"/>
        <dbReference type="ChEBI" id="CHEBI:67139"/>
        <dbReference type="EC" id="1.17.1.8"/>
    </reaction>
</comment>
<comment type="catalytic activity">
    <reaction evidence="1">
        <text>(S)-2,3,4,5-tetrahydrodipicolinate + NADP(+) + H2O = (2S,4S)-4-hydroxy-2,3,4,5-tetrahydrodipicolinate + NADPH + H(+)</text>
        <dbReference type="Rhea" id="RHEA:35331"/>
        <dbReference type="ChEBI" id="CHEBI:15377"/>
        <dbReference type="ChEBI" id="CHEBI:15378"/>
        <dbReference type="ChEBI" id="CHEBI:16845"/>
        <dbReference type="ChEBI" id="CHEBI:57783"/>
        <dbReference type="ChEBI" id="CHEBI:58349"/>
        <dbReference type="ChEBI" id="CHEBI:67139"/>
        <dbReference type="EC" id="1.17.1.8"/>
    </reaction>
</comment>
<comment type="pathway">
    <text evidence="1">Amino-acid biosynthesis; L-lysine biosynthesis via DAP pathway; (S)-tetrahydrodipicolinate from L-aspartate: step 4/4.</text>
</comment>
<comment type="subcellular location">
    <subcellularLocation>
        <location evidence="1">Cytoplasm</location>
    </subcellularLocation>
</comment>
<comment type="similarity">
    <text evidence="1">Belongs to the DapB family.</text>
</comment>
<comment type="caution">
    <text evidence="2">Was originally thought to be a dihydrodipicolinate reductase (DHDPR), catalyzing the conversion of dihydrodipicolinate to tetrahydrodipicolinate. However, it was shown in E.coli that the substrate of the enzymatic reaction is not dihydrodipicolinate (DHDP) but in fact (2S,4S)-4-hydroxy-2,3,4,5-tetrahydrodipicolinic acid (HTPA), the product released by the DapA-catalyzed reaction.</text>
</comment>
<accession>A3MPI2</accession>
<reference key="1">
    <citation type="journal article" date="2010" name="Genome Biol. Evol.">
        <title>Continuing evolution of Burkholderia mallei through genome reduction and large-scale rearrangements.</title>
        <authorList>
            <person name="Losada L."/>
            <person name="Ronning C.M."/>
            <person name="DeShazer D."/>
            <person name="Woods D."/>
            <person name="Fedorova N."/>
            <person name="Kim H.S."/>
            <person name="Shabalina S.A."/>
            <person name="Pearson T.R."/>
            <person name="Brinkac L."/>
            <person name="Tan P."/>
            <person name="Nandi T."/>
            <person name="Crabtree J."/>
            <person name="Badger J."/>
            <person name="Beckstrom-Sternberg S."/>
            <person name="Saqib M."/>
            <person name="Schutzer S.E."/>
            <person name="Keim P."/>
            <person name="Nierman W.C."/>
        </authorList>
    </citation>
    <scope>NUCLEOTIDE SEQUENCE [LARGE SCALE GENOMIC DNA]</scope>
    <source>
        <strain>NCTC 10247</strain>
    </source>
</reference>
<proteinExistence type="inferred from homology"/>
<sequence length="268" mass="28126">MSSMKIAIAGASGRMGRMLIEAVLAAPDATLAGALDRTGSSQLGQDAGAFLGKQTGVALTDDIERVCAEADYLIDFTRPEGTLAHLDAALRHDVKLVIGTTGFSEPQKAQLRAAGGKIALVFSANMSVGVNVTMKLLEFAAKQFAQGYDIEIIEAHHRHKVDAPSGTALMMGETIAAATGRTLDDCAVYGRHGVTGERDPSTIGFSAIRGGDIVGDHTVLFAGIGERIEITHKSASRVSYAQGALRAARFLAGHQAGFFDMQDVLGLR</sequence>
<gene>
    <name evidence="1" type="primary">dapB</name>
    <name type="ordered locus">BMA10247_2643</name>
</gene>
<dbReference type="EC" id="1.17.1.8" evidence="1"/>
<dbReference type="EMBL" id="CP000548">
    <property type="protein sequence ID" value="ABO04565.1"/>
    <property type="molecule type" value="Genomic_DNA"/>
</dbReference>
<dbReference type="SMR" id="A3MPI2"/>
<dbReference type="KEGG" id="bmn:BMA10247_2643"/>
<dbReference type="UniPathway" id="UPA00034">
    <property type="reaction ID" value="UER00018"/>
</dbReference>
<dbReference type="GO" id="GO:0005829">
    <property type="term" value="C:cytosol"/>
    <property type="evidence" value="ECO:0007669"/>
    <property type="project" value="TreeGrafter"/>
</dbReference>
<dbReference type="GO" id="GO:0008839">
    <property type="term" value="F:4-hydroxy-tetrahydrodipicolinate reductase"/>
    <property type="evidence" value="ECO:0007669"/>
    <property type="project" value="UniProtKB-EC"/>
</dbReference>
<dbReference type="GO" id="GO:0051287">
    <property type="term" value="F:NAD binding"/>
    <property type="evidence" value="ECO:0007669"/>
    <property type="project" value="UniProtKB-UniRule"/>
</dbReference>
<dbReference type="GO" id="GO:0050661">
    <property type="term" value="F:NADP binding"/>
    <property type="evidence" value="ECO:0007669"/>
    <property type="project" value="UniProtKB-UniRule"/>
</dbReference>
<dbReference type="GO" id="GO:0016726">
    <property type="term" value="F:oxidoreductase activity, acting on CH or CH2 groups, NAD or NADP as acceptor"/>
    <property type="evidence" value="ECO:0007669"/>
    <property type="project" value="UniProtKB-UniRule"/>
</dbReference>
<dbReference type="GO" id="GO:0019877">
    <property type="term" value="P:diaminopimelate biosynthetic process"/>
    <property type="evidence" value="ECO:0007669"/>
    <property type="project" value="UniProtKB-UniRule"/>
</dbReference>
<dbReference type="GO" id="GO:0009089">
    <property type="term" value="P:lysine biosynthetic process via diaminopimelate"/>
    <property type="evidence" value="ECO:0007669"/>
    <property type="project" value="UniProtKB-UniRule"/>
</dbReference>
<dbReference type="CDD" id="cd02274">
    <property type="entry name" value="DHDPR_N"/>
    <property type="match status" value="1"/>
</dbReference>
<dbReference type="FunFam" id="3.30.360.10:FF:000004">
    <property type="entry name" value="4-hydroxy-tetrahydrodipicolinate reductase"/>
    <property type="match status" value="1"/>
</dbReference>
<dbReference type="FunFam" id="3.40.50.720:FF:000048">
    <property type="entry name" value="4-hydroxy-tetrahydrodipicolinate reductase"/>
    <property type="match status" value="1"/>
</dbReference>
<dbReference type="Gene3D" id="3.30.360.10">
    <property type="entry name" value="Dihydrodipicolinate Reductase, domain 2"/>
    <property type="match status" value="1"/>
</dbReference>
<dbReference type="Gene3D" id="3.40.50.720">
    <property type="entry name" value="NAD(P)-binding Rossmann-like Domain"/>
    <property type="match status" value="1"/>
</dbReference>
<dbReference type="HAMAP" id="MF_00102">
    <property type="entry name" value="DapB"/>
    <property type="match status" value="1"/>
</dbReference>
<dbReference type="InterPro" id="IPR022663">
    <property type="entry name" value="DapB_C"/>
</dbReference>
<dbReference type="InterPro" id="IPR000846">
    <property type="entry name" value="DapB_N"/>
</dbReference>
<dbReference type="InterPro" id="IPR022664">
    <property type="entry name" value="DapB_N_CS"/>
</dbReference>
<dbReference type="InterPro" id="IPR023940">
    <property type="entry name" value="DHDPR_bac"/>
</dbReference>
<dbReference type="InterPro" id="IPR036291">
    <property type="entry name" value="NAD(P)-bd_dom_sf"/>
</dbReference>
<dbReference type="NCBIfam" id="TIGR00036">
    <property type="entry name" value="dapB"/>
    <property type="match status" value="1"/>
</dbReference>
<dbReference type="PANTHER" id="PTHR20836:SF0">
    <property type="entry name" value="4-HYDROXY-TETRAHYDRODIPICOLINATE REDUCTASE 1, CHLOROPLASTIC-RELATED"/>
    <property type="match status" value="1"/>
</dbReference>
<dbReference type="PANTHER" id="PTHR20836">
    <property type="entry name" value="DIHYDRODIPICOLINATE REDUCTASE"/>
    <property type="match status" value="1"/>
</dbReference>
<dbReference type="Pfam" id="PF05173">
    <property type="entry name" value="DapB_C"/>
    <property type="match status" value="1"/>
</dbReference>
<dbReference type="Pfam" id="PF01113">
    <property type="entry name" value="DapB_N"/>
    <property type="match status" value="1"/>
</dbReference>
<dbReference type="PIRSF" id="PIRSF000161">
    <property type="entry name" value="DHPR"/>
    <property type="match status" value="1"/>
</dbReference>
<dbReference type="SUPFAM" id="SSF55347">
    <property type="entry name" value="Glyceraldehyde-3-phosphate dehydrogenase-like, C-terminal domain"/>
    <property type="match status" value="1"/>
</dbReference>
<dbReference type="SUPFAM" id="SSF51735">
    <property type="entry name" value="NAD(P)-binding Rossmann-fold domains"/>
    <property type="match status" value="1"/>
</dbReference>
<dbReference type="PROSITE" id="PS01298">
    <property type="entry name" value="DAPB"/>
    <property type="match status" value="1"/>
</dbReference>
<feature type="chain" id="PRO_1000008542" description="4-hydroxy-tetrahydrodipicolinate reductase">
    <location>
        <begin position="1"/>
        <end position="268"/>
    </location>
</feature>
<feature type="active site" description="Proton donor/acceptor" evidence="1">
    <location>
        <position position="156"/>
    </location>
</feature>
<feature type="active site" description="Proton donor" evidence="1">
    <location>
        <position position="160"/>
    </location>
</feature>
<feature type="binding site" evidence="1">
    <location>
        <begin position="10"/>
        <end position="15"/>
    </location>
    <ligand>
        <name>NAD(+)</name>
        <dbReference type="ChEBI" id="CHEBI:57540"/>
    </ligand>
</feature>
<feature type="binding site" evidence="1">
    <location>
        <position position="36"/>
    </location>
    <ligand>
        <name>NAD(+)</name>
        <dbReference type="ChEBI" id="CHEBI:57540"/>
    </ligand>
</feature>
<feature type="binding site" evidence="1">
    <location>
        <position position="37"/>
    </location>
    <ligand>
        <name>NADP(+)</name>
        <dbReference type="ChEBI" id="CHEBI:58349"/>
    </ligand>
</feature>
<feature type="binding site" evidence="1">
    <location>
        <begin position="99"/>
        <end position="101"/>
    </location>
    <ligand>
        <name>NAD(+)</name>
        <dbReference type="ChEBI" id="CHEBI:57540"/>
    </ligand>
</feature>
<feature type="binding site" evidence="1">
    <location>
        <begin position="123"/>
        <end position="126"/>
    </location>
    <ligand>
        <name>NAD(+)</name>
        <dbReference type="ChEBI" id="CHEBI:57540"/>
    </ligand>
</feature>
<feature type="binding site" evidence="1">
    <location>
        <position position="157"/>
    </location>
    <ligand>
        <name>(S)-2,3,4,5-tetrahydrodipicolinate</name>
        <dbReference type="ChEBI" id="CHEBI:16845"/>
    </ligand>
</feature>
<feature type="binding site" evidence="1">
    <location>
        <begin position="166"/>
        <end position="167"/>
    </location>
    <ligand>
        <name>(S)-2,3,4,5-tetrahydrodipicolinate</name>
        <dbReference type="ChEBI" id="CHEBI:16845"/>
    </ligand>
</feature>
<protein>
    <recommendedName>
        <fullName evidence="1">4-hydroxy-tetrahydrodipicolinate reductase</fullName>
        <shortName evidence="1">HTPA reductase</shortName>
        <ecNumber evidence="1">1.17.1.8</ecNumber>
    </recommendedName>
</protein>
<evidence type="ECO:0000255" key="1">
    <source>
        <dbReference type="HAMAP-Rule" id="MF_00102"/>
    </source>
</evidence>
<evidence type="ECO:0000305" key="2"/>
<name>DAPB_BURM7</name>
<keyword id="KW-0028">Amino-acid biosynthesis</keyword>
<keyword id="KW-0963">Cytoplasm</keyword>
<keyword id="KW-0220">Diaminopimelate biosynthesis</keyword>
<keyword id="KW-0457">Lysine biosynthesis</keyword>
<keyword id="KW-0520">NAD</keyword>
<keyword id="KW-0521">NADP</keyword>
<keyword id="KW-0560">Oxidoreductase</keyword>
<organism>
    <name type="scientific">Burkholderia mallei (strain NCTC 10247)</name>
    <dbReference type="NCBI Taxonomy" id="320389"/>
    <lineage>
        <taxon>Bacteria</taxon>
        <taxon>Pseudomonadati</taxon>
        <taxon>Pseudomonadota</taxon>
        <taxon>Betaproteobacteria</taxon>
        <taxon>Burkholderiales</taxon>
        <taxon>Burkholderiaceae</taxon>
        <taxon>Burkholderia</taxon>
        <taxon>pseudomallei group</taxon>
    </lineage>
</organism>